<keyword id="KW-0004">4Fe-4S</keyword>
<keyword id="KW-0408">Iron</keyword>
<keyword id="KW-0411">Iron-sulfur</keyword>
<keyword id="KW-0479">Metal-binding</keyword>
<keyword id="KW-0496">Mitochondrion</keyword>
<keyword id="KW-0949">S-adenosyl-L-methionine</keyword>
<keyword id="KW-0808">Transferase</keyword>
<reference key="1">
    <citation type="submission" date="2005-08" db="EMBL/GenBank/DDBJ databases">
        <authorList>
            <person name="Doss R.P."/>
            <person name="Price R.R."/>
        </authorList>
    </citation>
    <scope>NUCLEOTIDE SEQUENCE [MRNA]</scope>
</reference>
<organism>
    <name type="scientific">Pisum sativum</name>
    <name type="common">Garden pea</name>
    <name type="synonym">Lathyrus oleraceus</name>
    <dbReference type="NCBI Taxonomy" id="3888"/>
    <lineage>
        <taxon>Eukaryota</taxon>
        <taxon>Viridiplantae</taxon>
        <taxon>Streptophyta</taxon>
        <taxon>Embryophyta</taxon>
        <taxon>Tracheophyta</taxon>
        <taxon>Spermatophyta</taxon>
        <taxon>Magnoliopsida</taxon>
        <taxon>eudicotyledons</taxon>
        <taxon>Gunneridae</taxon>
        <taxon>Pentapetalae</taxon>
        <taxon>rosids</taxon>
        <taxon>fabids</taxon>
        <taxon>Fabales</taxon>
        <taxon>Fabaceae</taxon>
        <taxon>Papilionoideae</taxon>
        <taxon>50 kb inversion clade</taxon>
        <taxon>NPAAA clade</taxon>
        <taxon>Hologalegina</taxon>
        <taxon>IRL clade</taxon>
        <taxon>Fabeae</taxon>
        <taxon>Pisum</taxon>
    </lineage>
</organism>
<evidence type="ECO:0000255" key="1">
    <source>
        <dbReference type="HAMAP-Rule" id="MF_03128"/>
    </source>
</evidence>
<evidence type="ECO:0000255" key="2">
    <source>
        <dbReference type="PROSITE-ProRule" id="PRU01266"/>
    </source>
</evidence>
<dbReference type="EC" id="2.8.1.8" evidence="1"/>
<dbReference type="EMBL" id="DQ181624">
    <property type="protein sequence ID" value="ABA29156.1"/>
    <property type="molecule type" value="mRNA"/>
</dbReference>
<dbReference type="SMR" id="Q3LSN4"/>
<dbReference type="EnsemblPlants" id="Psat5g270520.1">
    <property type="protein sequence ID" value="Psat5g270520.1.cds"/>
    <property type="gene ID" value="Psat5g270520"/>
</dbReference>
<dbReference type="Gramene" id="Psat5g270520.1">
    <property type="protein sequence ID" value="Psat5g270520.1.cds"/>
    <property type="gene ID" value="Psat5g270520"/>
</dbReference>
<dbReference type="OrthoDB" id="3231at2759"/>
<dbReference type="UniPathway" id="UPA00538">
    <property type="reaction ID" value="UER00593"/>
</dbReference>
<dbReference type="GO" id="GO:0005739">
    <property type="term" value="C:mitochondrion"/>
    <property type="evidence" value="ECO:0007669"/>
    <property type="project" value="UniProtKB-SubCell"/>
</dbReference>
<dbReference type="GO" id="GO:0051539">
    <property type="term" value="F:4 iron, 4 sulfur cluster binding"/>
    <property type="evidence" value="ECO:0007669"/>
    <property type="project" value="UniProtKB-UniRule"/>
</dbReference>
<dbReference type="GO" id="GO:0016992">
    <property type="term" value="F:lipoate synthase activity"/>
    <property type="evidence" value="ECO:0007669"/>
    <property type="project" value="UniProtKB-UniRule"/>
</dbReference>
<dbReference type="GO" id="GO:0046872">
    <property type="term" value="F:metal ion binding"/>
    <property type="evidence" value="ECO:0007669"/>
    <property type="project" value="UniProtKB-KW"/>
</dbReference>
<dbReference type="CDD" id="cd01335">
    <property type="entry name" value="Radical_SAM"/>
    <property type="match status" value="1"/>
</dbReference>
<dbReference type="FunFam" id="3.20.20.70:FF:000125">
    <property type="entry name" value="Lipoyl synthase, mitochondrial"/>
    <property type="match status" value="1"/>
</dbReference>
<dbReference type="Gene3D" id="3.20.20.70">
    <property type="entry name" value="Aldolase class I"/>
    <property type="match status" value="1"/>
</dbReference>
<dbReference type="HAMAP" id="MF_00206">
    <property type="entry name" value="Lipoyl_synth"/>
    <property type="match status" value="1"/>
</dbReference>
<dbReference type="HAMAP" id="MF_03128">
    <property type="entry name" value="Lipoyl_synth_plantM"/>
    <property type="match status" value="1"/>
</dbReference>
<dbReference type="InterPro" id="IPR013785">
    <property type="entry name" value="Aldolase_TIM"/>
</dbReference>
<dbReference type="InterPro" id="IPR006638">
    <property type="entry name" value="Elp3/MiaA/NifB-like_rSAM"/>
</dbReference>
<dbReference type="InterPro" id="IPR031691">
    <property type="entry name" value="LIAS_N"/>
</dbReference>
<dbReference type="InterPro" id="IPR003698">
    <property type="entry name" value="Lipoyl_synth"/>
</dbReference>
<dbReference type="InterPro" id="IPR027527">
    <property type="entry name" value="Lipoyl_synth_mt"/>
</dbReference>
<dbReference type="InterPro" id="IPR007197">
    <property type="entry name" value="rSAM"/>
</dbReference>
<dbReference type="NCBIfam" id="TIGR00510">
    <property type="entry name" value="lipA"/>
    <property type="match status" value="1"/>
</dbReference>
<dbReference type="NCBIfam" id="NF004019">
    <property type="entry name" value="PRK05481.1"/>
    <property type="match status" value="1"/>
</dbReference>
<dbReference type="NCBIfam" id="NF009544">
    <property type="entry name" value="PRK12928.1"/>
    <property type="match status" value="1"/>
</dbReference>
<dbReference type="PANTHER" id="PTHR10949">
    <property type="entry name" value="LIPOYL SYNTHASE"/>
    <property type="match status" value="1"/>
</dbReference>
<dbReference type="PANTHER" id="PTHR10949:SF0">
    <property type="entry name" value="LIPOYL SYNTHASE, MITOCHONDRIAL"/>
    <property type="match status" value="1"/>
</dbReference>
<dbReference type="Pfam" id="PF16881">
    <property type="entry name" value="LIAS_N"/>
    <property type="match status" value="1"/>
</dbReference>
<dbReference type="Pfam" id="PF04055">
    <property type="entry name" value="Radical_SAM"/>
    <property type="match status" value="1"/>
</dbReference>
<dbReference type="PIRSF" id="PIRSF005963">
    <property type="entry name" value="Lipoyl_synth"/>
    <property type="match status" value="1"/>
</dbReference>
<dbReference type="SFLD" id="SFLDF00271">
    <property type="entry name" value="lipoyl_synthase"/>
    <property type="match status" value="1"/>
</dbReference>
<dbReference type="SFLD" id="SFLDG01058">
    <property type="entry name" value="lipoyl_synthase_like"/>
    <property type="match status" value="1"/>
</dbReference>
<dbReference type="SMART" id="SM00729">
    <property type="entry name" value="Elp3"/>
    <property type="match status" value="1"/>
</dbReference>
<dbReference type="SUPFAM" id="SSF102114">
    <property type="entry name" value="Radical SAM enzymes"/>
    <property type="match status" value="1"/>
</dbReference>
<dbReference type="PROSITE" id="PS51918">
    <property type="entry name" value="RADICAL_SAM"/>
    <property type="match status" value="1"/>
</dbReference>
<comment type="function">
    <text evidence="1">Catalyzes the radical-mediated insertion of two sulfur atoms into the C-6 and C-8 positions of the octanoyl moiety bound to the lipoyl domains of lipoate-dependent enzymes, thereby converting the octanoylated domains into lipoylated derivatives.</text>
</comment>
<comment type="catalytic activity">
    <reaction evidence="1">
        <text>[[Fe-S] cluster scaffold protein carrying a second [4Fe-4S](2+) cluster] + N(6)-octanoyl-L-lysyl-[protein] + 2 oxidized [2Fe-2S]-[ferredoxin] + 2 S-adenosyl-L-methionine + 4 H(+) = [[Fe-S] cluster scaffold protein] + N(6)-[(R)-dihydrolipoyl]-L-lysyl-[protein] + 4 Fe(3+) + 2 hydrogen sulfide + 2 5'-deoxyadenosine + 2 L-methionine + 2 reduced [2Fe-2S]-[ferredoxin]</text>
        <dbReference type="Rhea" id="RHEA:16585"/>
        <dbReference type="Rhea" id="RHEA-COMP:9928"/>
        <dbReference type="Rhea" id="RHEA-COMP:10000"/>
        <dbReference type="Rhea" id="RHEA-COMP:10001"/>
        <dbReference type="Rhea" id="RHEA-COMP:10475"/>
        <dbReference type="Rhea" id="RHEA-COMP:14568"/>
        <dbReference type="Rhea" id="RHEA-COMP:14569"/>
        <dbReference type="ChEBI" id="CHEBI:15378"/>
        <dbReference type="ChEBI" id="CHEBI:17319"/>
        <dbReference type="ChEBI" id="CHEBI:29034"/>
        <dbReference type="ChEBI" id="CHEBI:29919"/>
        <dbReference type="ChEBI" id="CHEBI:33722"/>
        <dbReference type="ChEBI" id="CHEBI:33737"/>
        <dbReference type="ChEBI" id="CHEBI:33738"/>
        <dbReference type="ChEBI" id="CHEBI:57844"/>
        <dbReference type="ChEBI" id="CHEBI:59789"/>
        <dbReference type="ChEBI" id="CHEBI:78809"/>
        <dbReference type="ChEBI" id="CHEBI:83100"/>
        <dbReference type="EC" id="2.8.1.8"/>
    </reaction>
</comment>
<comment type="cofactor">
    <cofactor evidence="1">
        <name>[4Fe-4S] cluster</name>
        <dbReference type="ChEBI" id="CHEBI:49883"/>
    </cofactor>
    <text evidence="1">Binds 2 [4Fe-4S] clusters per subunit. One cluster is coordinated with 3 cysteines and an exchangeable S-adenosyl-L-methionine.</text>
</comment>
<comment type="pathway">
    <text evidence="1">Protein modification; protein lipoylation via endogenous pathway; protein N(6)-(lipoyl)lysine from octanoyl-[acyl-carrier-protein]: step 2/2.</text>
</comment>
<comment type="subcellular location">
    <subcellularLocation>
        <location evidence="1">Mitochondrion</location>
    </subcellularLocation>
</comment>
<comment type="miscellaneous">
    <text evidence="1">This protein may be expected to contain an N-terminal transit peptide but none has been predicted.</text>
</comment>
<comment type="similarity">
    <text evidence="1">Belongs to the radical SAM superfamily. Lipoyl synthase family.</text>
</comment>
<protein>
    <recommendedName>
        <fullName>Lipoyl synthase 1, mitochondrial</fullName>
        <ecNumber evidence="1">2.8.1.8</ecNumber>
    </recommendedName>
    <alternativeName>
        <fullName evidence="1">Lipoate synthase 1</fullName>
        <shortName evidence="1">LS 1</shortName>
        <shortName evidence="1">Lip-syn 1</shortName>
    </alternativeName>
    <alternativeName>
        <fullName evidence="1">Lipoic acid synthase 1</fullName>
    </alternativeName>
</protein>
<sequence>MMYSRFRTVAGNLNCAAKRLSSSSTTTTTTSAPSELQQNLAALRARLAMESPSLSDFISLKSDNAYSVEVGTKKKPLPKPKWMKESIPGGEKYVQIKKKLRELKLHTVCEEAKCPNLGECWSGGETGTATATIMILGDTCTRGCRFCNVKTSRTPPPPDPDEPTNVAEAIASWGLDYVVITSVDRDDLPDQGSGHFTETVQKLKALKPSTLIEALVPDFRGNAECVEKVSKSGLDVFAHNIETVEELQSAVRDHRANFKQSLDVLMMAKEYAPAGTLTKTSIMLGCGETPDQIVKTMEKVRAAGVDVMTFGQYMRPSKRHMPVSEYITPEAFEKYQTLGMEMGFRYVASGPMVRSSYKAGEFYIKSMIDSDRAASS</sequence>
<feature type="chain" id="PRO_0000398851" description="Lipoyl synthase 1, mitochondrial">
    <location>
        <begin position="1"/>
        <end position="376"/>
    </location>
</feature>
<feature type="domain" description="Radical SAM core" evidence="2">
    <location>
        <begin position="125"/>
        <end position="345"/>
    </location>
</feature>
<feature type="binding site" evidence="1">
    <location>
        <position position="109"/>
    </location>
    <ligand>
        <name>[4Fe-4S] cluster</name>
        <dbReference type="ChEBI" id="CHEBI:49883"/>
        <label>1</label>
    </ligand>
</feature>
<feature type="binding site" evidence="1">
    <location>
        <position position="114"/>
    </location>
    <ligand>
        <name>[4Fe-4S] cluster</name>
        <dbReference type="ChEBI" id="CHEBI:49883"/>
        <label>1</label>
    </ligand>
</feature>
<feature type="binding site" evidence="1">
    <location>
        <position position="120"/>
    </location>
    <ligand>
        <name>[4Fe-4S] cluster</name>
        <dbReference type="ChEBI" id="CHEBI:49883"/>
        <label>1</label>
    </ligand>
</feature>
<feature type="binding site" evidence="1">
    <location>
        <position position="140"/>
    </location>
    <ligand>
        <name>[4Fe-4S] cluster</name>
        <dbReference type="ChEBI" id="CHEBI:49883"/>
        <label>2</label>
        <note>4Fe-4S-S-AdoMet</note>
    </ligand>
</feature>
<feature type="binding site" evidence="1">
    <location>
        <position position="144"/>
    </location>
    <ligand>
        <name>[4Fe-4S] cluster</name>
        <dbReference type="ChEBI" id="CHEBI:49883"/>
        <label>2</label>
        <note>4Fe-4S-S-AdoMet</note>
    </ligand>
</feature>
<feature type="binding site" evidence="1">
    <location>
        <position position="147"/>
    </location>
    <ligand>
        <name>[4Fe-4S] cluster</name>
        <dbReference type="ChEBI" id="CHEBI:49883"/>
        <label>2</label>
        <note>4Fe-4S-S-AdoMet</note>
    </ligand>
</feature>
<feature type="binding site" evidence="1">
    <location>
        <position position="356"/>
    </location>
    <ligand>
        <name>[4Fe-4S] cluster</name>
        <dbReference type="ChEBI" id="CHEBI:49883"/>
        <label>1</label>
    </ligand>
</feature>
<accession>Q3LSN4</accession>
<name>LIAS1_PEA</name>
<gene>
    <name evidence="1" type="primary">LIP1-1</name>
</gene>
<proteinExistence type="evidence at transcript level"/>